<dbReference type="EC" id="2.3.1.184"/>
<dbReference type="EMBL" id="U45854">
    <property type="protein sequence ID" value="AAA86841.1"/>
    <property type="molecule type" value="Genomic_DNA"/>
</dbReference>
<dbReference type="SMR" id="Q46968"/>
<dbReference type="GO" id="GO:0061579">
    <property type="term" value="F:N-acyl homoserine lactone synthase activity"/>
    <property type="evidence" value="ECO:0007669"/>
    <property type="project" value="UniProtKB-EC"/>
</dbReference>
<dbReference type="GO" id="GO:0009372">
    <property type="term" value="P:quorum sensing"/>
    <property type="evidence" value="ECO:0007669"/>
    <property type="project" value="UniProtKB-KW"/>
</dbReference>
<dbReference type="GO" id="GO:0007165">
    <property type="term" value="P:signal transduction"/>
    <property type="evidence" value="ECO:0007669"/>
    <property type="project" value="TreeGrafter"/>
</dbReference>
<dbReference type="Gene3D" id="3.40.630.30">
    <property type="match status" value="1"/>
</dbReference>
<dbReference type="InterPro" id="IPR016181">
    <property type="entry name" value="Acyl_CoA_acyltransferase"/>
</dbReference>
<dbReference type="InterPro" id="IPR018311">
    <property type="entry name" value="Autoind_synth_CS"/>
</dbReference>
<dbReference type="InterPro" id="IPR001690">
    <property type="entry name" value="Autoind_synthase"/>
</dbReference>
<dbReference type="PANTHER" id="PTHR39322">
    <property type="entry name" value="ACYL-HOMOSERINE-LACTONE SYNTHASE"/>
    <property type="match status" value="1"/>
</dbReference>
<dbReference type="PANTHER" id="PTHR39322:SF1">
    <property type="entry name" value="ISOVALERYL-HOMOSERINE LACTONE SYNTHASE"/>
    <property type="match status" value="1"/>
</dbReference>
<dbReference type="Pfam" id="PF00765">
    <property type="entry name" value="Autoind_synth"/>
    <property type="match status" value="1"/>
</dbReference>
<dbReference type="PRINTS" id="PR01549">
    <property type="entry name" value="AUTOINDCRSYN"/>
</dbReference>
<dbReference type="SUPFAM" id="SSF55729">
    <property type="entry name" value="Acyl-CoA N-acyltransferases (Nat)"/>
    <property type="match status" value="1"/>
</dbReference>
<dbReference type="PROSITE" id="PS00949">
    <property type="entry name" value="AUTOINDUCER_SYNTH_1"/>
    <property type="match status" value="1"/>
</dbReference>
<dbReference type="PROSITE" id="PS51187">
    <property type="entry name" value="AUTOINDUCER_SYNTH_2"/>
    <property type="match status" value="1"/>
</dbReference>
<organism>
    <name type="scientific">Dickeya chrysanthemi</name>
    <name type="common">Pectobacterium chrysanthemi</name>
    <name type="synonym">Erwinia chrysanthemi</name>
    <dbReference type="NCBI Taxonomy" id="556"/>
    <lineage>
        <taxon>Bacteria</taxon>
        <taxon>Pseudomonadati</taxon>
        <taxon>Pseudomonadota</taxon>
        <taxon>Gammaproteobacteria</taxon>
        <taxon>Enterobacterales</taxon>
        <taxon>Pectobacteriaceae</taxon>
        <taxon>Dickeya</taxon>
    </lineage>
</organism>
<evidence type="ECO:0000255" key="1">
    <source>
        <dbReference type="PROSITE-ProRule" id="PRU00533"/>
    </source>
</evidence>
<name>ECHI_DICCH</name>
<comment type="function">
    <text>Required for the synthesis of OHHL (N-(3-oxohexanoyl)-L-homoserine lactone), an autoinducer molecule which binds to the EchR transcriptional regulator.</text>
</comment>
<comment type="catalytic activity">
    <reaction>
        <text>a fatty acyl-[ACP] + S-adenosyl-L-methionine = an N-acyl-L-homoserine lactone + S-methyl-5'-thioadenosine + holo-[ACP] + H(+)</text>
        <dbReference type="Rhea" id="RHEA:10096"/>
        <dbReference type="Rhea" id="RHEA-COMP:9685"/>
        <dbReference type="Rhea" id="RHEA-COMP:14125"/>
        <dbReference type="ChEBI" id="CHEBI:15378"/>
        <dbReference type="ChEBI" id="CHEBI:17509"/>
        <dbReference type="ChEBI" id="CHEBI:55474"/>
        <dbReference type="ChEBI" id="CHEBI:59789"/>
        <dbReference type="ChEBI" id="CHEBI:64479"/>
        <dbReference type="ChEBI" id="CHEBI:138651"/>
        <dbReference type="EC" id="2.3.1.184"/>
    </reaction>
</comment>
<comment type="similarity">
    <text evidence="1">Belongs to the autoinducer synthase family.</text>
</comment>
<sequence length="212" mass="24789">MLEIFDVSFSLMSNNKLDEVFTLRKDTFKDRLDWAVNCINGMEFDEYDNEHTTYLLGVKEGKVICSVRFIEIKYPNMITGTFYSYFDNLKIPEGNYIESSRFFVDRDRVRNLIGTRNPACVTLFLAMINYARKYHYDGILTIVSHPMLTLLKRSGWRISIIQQGLSEKQERIYLLHLPTDDDSRHALIERITQMTQAESEQLKTLPLLVPLA</sequence>
<gene>
    <name type="primary">echI</name>
</gene>
<feature type="chain" id="PRO_0000210883" description="Acyl-homoserine-lactone synthase">
    <location>
        <begin position="1"/>
        <end position="212"/>
    </location>
</feature>
<reference key="1">
    <citation type="submission" date="1996-01" db="EMBL/GenBank/DDBJ databases">
        <authorList>
            <person name="Sebaihia M."/>
            <person name="Harrison O."/>
            <person name="Kell C."/>
            <person name="Minton N."/>
            <person name="Salmond G.P.C."/>
        </authorList>
    </citation>
    <scope>NUCLEOTIDE SEQUENCE [GENOMIC DNA]</scope>
    <source>
        <strain>NCPPB 1066</strain>
    </source>
</reference>
<accession>Q46968</accession>
<protein>
    <recommendedName>
        <fullName>Acyl-homoserine-lactone synthase</fullName>
        <ecNumber>2.3.1.184</ecNumber>
    </recommendedName>
    <alternativeName>
        <fullName>Autoinducer synthesis protein EchI</fullName>
    </alternativeName>
</protein>
<keyword id="KW-0071">Autoinducer synthesis</keyword>
<keyword id="KW-0673">Quorum sensing</keyword>
<keyword id="KW-0949">S-adenosyl-L-methionine</keyword>
<keyword id="KW-0808">Transferase</keyword>
<proteinExistence type="inferred from homology"/>